<evidence type="ECO:0000255" key="1">
    <source>
        <dbReference type="HAMAP-Rule" id="MF_00069"/>
    </source>
</evidence>
<gene>
    <name evidence="1" type="primary">hcp</name>
    <name type="ordered locus">SCH_0892</name>
</gene>
<proteinExistence type="inferred from homology"/>
<name>HCP_SALCH</name>
<sequence length="550" mass="60114">MFCVQCEQTIRTPAGNGCSYAQGMCGKTAETSDLQDLLIAALQGLSAWAVKAREYGIINHDVDNFAPRAFFSTLTNVNFDSPRIVGYAREAIALREALKAQCLSVDANAHCDNPMADLQLVSDDLGELQRQAAEFIPNKDKAAIGENILGLRLLCLYGLKGAAAYMEHAHVLGQYDNDIYAQYHKIMAWLGTWPADMNALLECAMEIGQMNFKVMSILDAGETTKYGHPTPTQVNVKATEGKCILISGHDLKDLYNLLEQTEGTGVNVYTHGEMLPAHGYPELRKFKHLVGNYGSGWQNQQVEFARFPGPIVMTSNCIIDPTVGSYDDRIWTRSIVGWPGVSHLEGDDFGPVIAQAQQMAGFPYSEIPHLITVGFGRQTLLGAADTLIDLVSREKLRHIFLVGGCDGARGERNYFTDFATSVPDDCLILTLACGKYRFNKLEFGDIEGLPRLVDAGQCNDAYSAIILAVTLAEKLGCGVNDLPLSLVLSWFEQKAIVILLTLLSLGVKNIVTGPTAPGFFTPDLLAILNEKFGLRSVTTVEEDMKQLLSA</sequence>
<keyword id="KW-0001">2Fe-2S</keyword>
<keyword id="KW-0963">Cytoplasm</keyword>
<keyword id="KW-0408">Iron</keyword>
<keyword id="KW-0411">Iron-sulfur</keyword>
<keyword id="KW-0479">Metal-binding</keyword>
<keyword id="KW-0560">Oxidoreductase</keyword>
<organism>
    <name type="scientific">Salmonella choleraesuis (strain SC-B67)</name>
    <dbReference type="NCBI Taxonomy" id="321314"/>
    <lineage>
        <taxon>Bacteria</taxon>
        <taxon>Pseudomonadati</taxon>
        <taxon>Pseudomonadota</taxon>
        <taxon>Gammaproteobacteria</taxon>
        <taxon>Enterobacterales</taxon>
        <taxon>Enterobacteriaceae</taxon>
        <taxon>Salmonella</taxon>
    </lineage>
</organism>
<feature type="chain" id="PRO_1000009160" description="Hydroxylamine reductase">
    <location>
        <begin position="1"/>
        <end position="550"/>
    </location>
</feature>
<feature type="binding site" evidence="1">
    <location>
        <position position="3"/>
    </location>
    <ligand>
        <name>[2Fe-2S] cluster</name>
        <dbReference type="ChEBI" id="CHEBI:190135"/>
    </ligand>
</feature>
<feature type="binding site" evidence="1">
    <location>
        <position position="6"/>
    </location>
    <ligand>
        <name>[2Fe-2S] cluster</name>
        <dbReference type="ChEBI" id="CHEBI:190135"/>
    </ligand>
</feature>
<feature type="binding site" evidence="1">
    <location>
        <position position="18"/>
    </location>
    <ligand>
        <name>[2Fe-2S] cluster</name>
        <dbReference type="ChEBI" id="CHEBI:190135"/>
    </ligand>
</feature>
<feature type="binding site" evidence="1">
    <location>
        <position position="25"/>
    </location>
    <ligand>
        <name>[2Fe-2S] cluster</name>
        <dbReference type="ChEBI" id="CHEBI:190135"/>
    </ligand>
</feature>
<feature type="binding site" evidence="1">
    <location>
        <position position="249"/>
    </location>
    <ligand>
        <name>hybrid [4Fe-2O-2S] cluster</name>
        <dbReference type="ChEBI" id="CHEBI:60519"/>
    </ligand>
</feature>
<feature type="binding site" evidence="1">
    <location>
        <position position="273"/>
    </location>
    <ligand>
        <name>hybrid [4Fe-2O-2S] cluster</name>
        <dbReference type="ChEBI" id="CHEBI:60519"/>
    </ligand>
</feature>
<feature type="binding site" evidence="1">
    <location>
        <position position="317"/>
    </location>
    <ligand>
        <name>hybrid [4Fe-2O-2S] cluster</name>
        <dbReference type="ChEBI" id="CHEBI:60519"/>
    </ligand>
</feature>
<feature type="binding site" description="via persulfide group" evidence="1">
    <location>
        <position position="405"/>
    </location>
    <ligand>
        <name>hybrid [4Fe-2O-2S] cluster</name>
        <dbReference type="ChEBI" id="CHEBI:60519"/>
    </ligand>
</feature>
<feature type="binding site" evidence="1">
    <location>
        <position position="433"/>
    </location>
    <ligand>
        <name>hybrid [4Fe-2O-2S] cluster</name>
        <dbReference type="ChEBI" id="CHEBI:60519"/>
    </ligand>
</feature>
<feature type="binding site" evidence="1">
    <location>
        <position position="458"/>
    </location>
    <ligand>
        <name>hybrid [4Fe-2O-2S] cluster</name>
        <dbReference type="ChEBI" id="CHEBI:60519"/>
    </ligand>
</feature>
<feature type="binding site" evidence="1">
    <location>
        <position position="492"/>
    </location>
    <ligand>
        <name>hybrid [4Fe-2O-2S] cluster</name>
        <dbReference type="ChEBI" id="CHEBI:60519"/>
    </ligand>
</feature>
<feature type="binding site" evidence="1">
    <location>
        <position position="494"/>
    </location>
    <ligand>
        <name>hybrid [4Fe-2O-2S] cluster</name>
        <dbReference type="ChEBI" id="CHEBI:60519"/>
    </ligand>
</feature>
<feature type="modified residue" description="Cysteine persulfide" evidence="1">
    <location>
        <position position="405"/>
    </location>
</feature>
<comment type="function">
    <text evidence="1">Catalyzes the reduction of hydroxylamine to form NH(3) and H(2)O.</text>
</comment>
<comment type="catalytic activity">
    <reaction evidence="1">
        <text>A + NH4(+) + H2O = hydroxylamine + AH2 + H(+)</text>
        <dbReference type="Rhea" id="RHEA:22052"/>
        <dbReference type="ChEBI" id="CHEBI:13193"/>
        <dbReference type="ChEBI" id="CHEBI:15377"/>
        <dbReference type="ChEBI" id="CHEBI:15378"/>
        <dbReference type="ChEBI" id="CHEBI:15429"/>
        <dbReference type="ChEBI" id="CHEBI:17499"/>
        <dbReference type="ChEBI" id="CHEBI:28938"/>
        <dbReference type="EC" id="1.7.99.1"/>
    </reaction>
</comment>
<comment type="cofactor">
    <cofactor evidence="1">
        <name>[2Fe-2S] cluster</name>
        <dbReference type="ChEBI" id="CHEBI:190135"/>
    </cofactor>
    <text evidence="1">Binds 1 [2Fe-2S] cluster.</text>
</comment>
<comment type="cofactor">
    <cofactor evidence="1">
        <name>hybrid [4Fe-2O-2S] cluster</name>
        <dbReference type="ChEBI" id="CHEBI:60519"/>
    </cofactor>
    <text evidence="1">Binds 1 hybrid [4Fe-2O-2S] cluster.</text>
</comment>
<comment type="subcellular location">
    <subcellularLocation>
        <location evidence="1">Cytoplasm</location>
    </subcellularLocation>
</comment>
<comment type="similarity">
    <text evidence="1">Belongs to the HCP family.</text>
</comment>
<protein>
    <recommendedName>
        <fullName evidence="1">Hydroxylamine reductase</fullName>
        <ecNumber evidence="1">1.7.99.1</ecNumber>
    </recommendedName>
    <alternativeName>
        <fullName evidence="1">Hybrid-cluster protein</fullName>
        <shortName evidence="1">HCP</shortName>
    </alternativeName>
    <alternativeName>
        <fullName evidence="1">Prismane protein</fullName>
    </alternativeName>
</protein>
<reference key="1">
    <citation type="journal article" date="2005" name="Nucleic Acids Res.">
        <title>The genome sequence of Salmonella enterica serovar Choleraesuis, a highly invasive and resistant zoonotic pathogen.</title>
        <authorList>
            <person name="Chiu C.-H."/>
            <person name="Tang P."/>
            <person name="Chu C."/>
            <person name="Hu S."/>
            <person name="Bao Q."/>
            <person name="Yu J."/>
            <person name="Chou Y.-Y."/>
            <person name="Wang H.-S."/>
            <person name="Lee Y.-S."/>
        </authorList>
    </citation>
    <scope>NUCLEOTIDE SEQUENCE [LARGE SCALE GENOMIC DNA]</scope>
    <source>
        <strain>SC-B67</strain>
    </source>
</reference>
<accession>Q57R63</accession>
<dbReference type="EC" id="1.7.99.1" evidence="1"/>
<dbReference type="EMBL" id="AE017220">
    <property type="protein sequence ID" value="AAX64798.1"/>
    <property type="molecule type" value="Genomic_DNA"/>
</dbReference>
<dbReference type="RefSeq" id="WP_000458777.1">
    <property type="nucleotide sequence ID" value="NC_006905.1"/>
</dbReference>
<dbReference type="SMR" id="Q57R63"/>
<dbReference type="KEGG" id="sec:SCH_0892"/>
<dbReference type="HOGENOM" id="CLU_038344_2_0_6"/>
<dbReference type="Proteomes" id="UP000000538">
    <property type="component" value="Chromosome"/>
</dbReference>
<dbReference type="GO" id="GO:0005737">
    <property type="term" value="C:cytoplasm"/>
    <property type="evidence" value="ECO:0007669"/>
    <property type="project" value="UniProtKB-SubCell"/>
</dbReference>
<dbReference type="GO" id="GO:0051537">
    <property type="term" value="F:2 iron, 2 sulfur cluster binding"/>
    <property type="evidence" value="ECO:0007669"/>
    <property type="project" value="UniProtKB-KW"/>
</dbReference>
<dbReference type="GO" id="GO:0050418">
    <property type="term" value="F:hydroxylamine reductase activity"/>
    <property type="evidence" value="ECO:0007669"/>
    <property type="project" value="UniProtKB-UniRule"/>
</dbReference>
<dbReference type="GO" id="GO:0046872">
    <property type="term" value="F:metal ion binding"/>
    <property type="evidence" value="ECO:0007669"/>
    <property type="project" value="UniProtKB-KW"/>
</dbReference>
<dbReference type="GO" id="GO:0004601">
    <property type="term" value="F:peroxidase activity"/>
    <property type="evidence" value="ECO:0007669"/>
    <property type="project" value="TreeGrafter"/>
</dbReference>
<dbReference type="GO" id="GO:0042542">
    <property type="term" value="P:response to hydrogen peroxide"/>
    <property type="evidence" value="ECO:0007669"/>
    <property type="project" value="TreeGrafter"/>
</dbReference>
<dbReference type="CDD" id="cd01914">
    <property type="entry name" value="HCP"/>
    <property type="match status" value="1"/>
</dbReference>
<dbReference type="FunFam" id="1.20.1270.20:FF:000001">
    <property type="entry name" value="Hydroxylamine reductase"/>
    <property type="match status" value="1"/>
</dbReference>
<dbReference type="FunFam" id="1.20.1270.20:FF:000002">
    <property type="entry name" value="Hydroxylamine reductase"/>
    <property type="match status" value="1"/>
</dbReference>
<dbReference type="FunFam" id="3.40.50.2030:FF:000001">
    <property type="entry name" value="Hydroxylamine reductase"/>
    <property type="match status" value="1"/>
</dbReference>
<dbReference type="FunFam" id="3.40.50.2030:FF:000002">
    <property type="entry name" value="Hydroxylamine reductase"/>
    <property type="match status" value="1"/>
</dbReference>
<dbReference type="Gene3D" id="1.20.1270.20">
    <property type="match status" value="2"/>
</dbReference>
<dbReference type="Gene3D" id="3.40.50.2030">
    <property type="match status" value="2"/>
</dbReference>
<dbReference type="HAMAP" id="MF_00069">
    <property type="entry name" value="Hydroxylam_reduct"/>
    <property type="match status" value="1"/>
</dbReference>
<dbReference type="InterPro" id="IPR004137">
    <property type="entry name" value="HCP/CODH"/>
</dbReference>
<dbReference type="InterPro" id="IPR010048">
    <property type="entry name" value="Hydroxylam_reduct"/>
</dbReference>
<dbReference type="InterPro" id="IPR016099">
    <property type="entry name" value="Prismane-like_a/b-sand"/>
</dbReference>
<dbReference type="InterPro" id="IPR011254">
    <property type="entry name" value="Prismane-like_sf"/>
</dbReference>
<dbReference type="InterPro" id="IPR016100">
    <property type="entry name" value="Prismane_a-bundle"/>
</dbReference>
<dbReference type="NCBIfam" id="TIGR01703">
    <property type="entry name" value="hybrid_clust"/>
    <property type="match status" value="1"/>
</dbReference>
<dbReference type="NCBIfam" id="NF003658">
    <property type="entry name" value="PRK05290.1"/>
    <property type="match status" value="1"/>
</dbReference>
<dbReference type="PANTHER" id="PTHR30109">
    <property type="entry name" value="HYDROXYLAMINE REDUCTASE"/>
    <property type="match status" value="1"/>
</dbReference>
<dbReference type="PANTHER" id="PTHR30109:SF0">
    <property type="entry name" value="HYDROXYLAMINE REDUCTASE"/>
    <property type="match status" value="1"/>
</dbReference>
<dbReference type="Pfam" id="PF03063">
    <property type="entry name" value="Prismane"/>
    <property type="match status" value="1"/>
</dbReference>
<dbReference type="PIRSF" id="PIRSF000076">
    <property type="entry name" value="HCP"/>
    <property type="match status" value="1"/>
</dbReference>
<dbReference type="SUPFAM" id="SSF56821">
    <property type="entry name" value="Prismane protein-like"/>
    <property type="match status" value="1"/>
</dbReference>